<sequence>MPDELRAEKSFPSKPYDSLKNKSEFDRVYQKGFKKHNPFFSLFVLDLSKEPPKEKEGFKDPLSCRLKDKKTLYLLGLSVSKKVGNAVKRNLIKRRLRSLTLKHAALCQGLALVFVPRSDCYHLDFWALEKHFLEMLTSIKNYMNKALKGLKKGITHTYAKQ</sequence>
<proteinExistence type="inferred from homology"/>
<gene>
    <name evidence="1" type="primary">rnpA</name>
    <name type="ordered locus">HPSH_07410</name>
</gene>
<evidence type="ECO:0000255" key="1">
    <source>
        <dbReference type="HAMAP-Rule" id="MF_00227"/>
    </source>
</evidence>
<protein>
    <recommendedName>
        <fullName evidence="1">Ribonuclease P protein component</fullName>
        <shortName evidence="1">RNase P protein</shortName>
        <shortName evidence="1">RNaseP protein</shortName>
        <ecNumber evidence="1">3.1.26.5</ecNumber>
    </recommendedName>
    <alternativeName>
        <fullName evidence="1">Protein C5</fullName>
    </alternativeName>
</protein>
<feature type="chain" id="PRO_1000100365" description="Ribonuclease P protein component">
    <location>
        <begin position="1"/>
        <end position="161"/>
    </location>
</feature>
<organism>
    <name type="scientific">Helicobacter pylori (strain Shi470)</name>
    <dbReference type="NCBI Taxonomy" id="512562"/>
    <lineage>
        <taxon>Bacteria</taxon>
        <taxon>Pseudomonadati</taxon>
        <taxon>Campylobacterota</taxon>
        <taxon>Epsilonproteobacteria</taxon>
        <taxon>Campylobacterales</taxon>
        <taxon>Helicobacteraceae</taxon>
        <taxon>Helicobacter</taxon>
    </lineage>
</organism>
<comment type="function">
    <text evidence="1">RNaseP catalyzes the removal of the 5'-leader sequence from pre-tRNA to produce the mature 5'-terminus. It can also cleave other RNA substrates such as 4.5S RNA. The protein component plays an auxiliary but essential role in vivo by binding to the 5'-leader sequence and broadening the substrate specificity of the ribozyme.</text>
</comment>
<comment type="catalytic activity">
    <reaction evidence="1">
        <text>Endonucleolytic cleavage of RNA, removing 5'-extranucleotides from tRNA precursor.</text>
        <dbReference type="EC" id="3.1.26.5"/>
    </reaction>
</comment>
<comment type="subunit">
    <text evidence="1">Consists of a catalytic RNA component (M1 or rnpB) and a protein subunit.</text>
</comment>
<comment type="similarity">
    <text evidence="1">Belongs to the RnpA family.</text>
</comment>
<dbReference type="EC" id="3.1.26.5" evidence="1"/>
<dbReference type="EMBL" id="CP001072">
    <property type="protein sequence ID" value="ACD48875.1"/>
    <property type="molecule type" value="Genomic_DNA"/>
</dbReference>
<dbReference type="RefSeq" id="WP_001112451.1">
    <property type="nucleotide sequence ID" value="NC_010698.2"/>
</dbReference>
<dbReference type="SMR" id="B2UVJ3"/>
<dbReference type="KEGG" id="hps:HPSH_07410"/>
<dbReference type="HOGENOM" id="CLU_117179_9_3_7"/>
<dbReference type="GO" id="GO:0030677">
    <property type="term" value="C:ribonuclease P complex"/>
    <property type="evidence" value="ECO:0007669"/>
    <property type="project" value="TreeGrafter"/>
</dbReference>
<dbReference type="GO" id="GO:0042781">
    <property type="term" value="F:3'-tRNA processing endoribonuclease activity"/>
    <property type="evidence" value="ECO:0007669"/>
    <property type="project" value="TreeGrafter"/>
</dbReference>
<dbReference type="GO" id="GO:0004526">
    <property type="term" value="F:ribonuclease P activity"/>
    <property type="evidence" value="ECO:0007669"/>
    <property type="project" value="UniProtKB-UniRule"/>
</dbReference>
<dbReference type="GO" id="GO:0000049">
    <property type="term" value="F:tRNA binding"/>
    <property type="evidence" value="ECO:0007669"/>
    <property type="project" value="UniProtKB-UniRule"/>
</dbReference>
<dbReference type="GO" id="GO:0001682">
    <property type="term" value="P:tRNA 5'-leader removal"/>
    <property type="evidence" value="ECO:0007669"/>
    <property type="project" value="UniProtKB-UniRule"/>
</dbReference>
<dbReference type="FunFam" id="3.30.230.10:FF:000143">
    <property type="entry name" value="Ribonuclease P protein component"/>
    <property type="match status" value="1"/>
</dbReference>
<dbReference type="Gene3D" id="3.30.230.10">
    <property type="match status" value="1"/>
</dbReference>
<dbReference type="HAMAP" id="MF_00227">
    <property type="entry name" value="RNase_P"/>
    <property type="match status" value="1"/>
</dbReference>
<dbReference type="InterPro" id="IPR020568">
    <property type="entry name" value="Ribosomal_Su5_D2-typ_SF"/>
</dbReference>
<dbReference type="InterPro" id="IPR014721">
    <property type="entry name" value="Ribsml_uS5_D2-typ_fold_subgr"/>
</dbReference>
<dbReference type="InterPro" id="IPR000100">
    <property type="entry name" value="RNase_P"/>
</dbReference>
<dbReference type="InterPro" id="IPR020539">
    <property type="entry name" value="RNase_P_CS"/>
</dbReference>
<dbReference type="NCBIfam" id="TIGR00188">
    <property type="entry name" value="rnpA"/>
    <property type="match status" value="1"/>
</dbReference>
<dbReference type="PANTHER" id="PTHR33992">
    <property type="entry name" value="RIBONUCLEASE P PROTEIN COMPONENT"/>
    <property type="match status" value="1"/>
</dbReference>
<dbReference type="PANTHER" id="PTHR33992:SF1">
    <property type="entry name" value="RIBONUCLEASE P PROTEIN COMPONENT"/>
    <property type="match status" value="1"/>
</dbReference>
<dbReference type="Pfam" id="PF00825">
    <property type="entry name" value="Ribonuclease_P"/>
    <property type="match status" value="1"/>
</dbReference>
<dbReference type="SUPFAM" id="SSF54211">
    <property type="entry name" value="Ribosomal protein S5 domain 2-like"/>
    <property type="match status" value="1"/>
</dbReference>
<dbReference type="PROSITE" id="PS00648">
    <property type="entry name" value="RIBONUCLEASE_P"/>
    <property type="match status" value="1"/>
</dbReference>
<reference key="1">
    <citation type="submission" date="2008-05" db="EMBL/GenBank/DDBJ databases">
        <title>Genome sequence of Helicobacter pylori from the remote Amazon: traces of Asian ancestry of the first Americans.</title>
        <authorList>
            <person name="Kersulyte D."/>
            <person name="Kalia A."/>
            <person name="Gilman R.H."/>
            <person name="Berg D.E."/>
        </authorList>
    </citation>
    <scope>NUCLEOTIDE SEQUENCE [LARGE SCALE GENOMIC DNA]</scope>
    <source>
        <strain>Shi470</strain>
    </source>
</reference>
<keyword id="KW-0255">Endonuclease</keyword>
<keyword id="KW-0378">Hydrolase</keyword>
<keyword id="KW-0540">Nuclease</keyword>
<keyword id="KW-0694">RNA-binding</keyword>
<keyword id="KW-0819">tRNA processing</keyword>
<name>RNPA_HELPS</name>
<accession>B2UVJ3</accession>